<accession>Q60367</accession>
<keyword id="KW-0328">Glycosyltransferase</keyword>
<keyword id="KW-0660">Purine salvage</keyword>
<keyword id="KW-1185">Reference proteome</keyword>
<keyword id="KW-0808">Transferase</keyword>
<comment type="function">
    <text evidence="1">Catalyzes the reversible phosphorylation of S-methyl-5'-thioinosine (MTI) to hypoxanthine and 5-methylthioribose-1-phosphate. Involved in the breakdown of S-methyl-5'-thioadenosine (MTA), a major by-product of polyamine biosynthesis. Catabolism of (MTA) occurs via deamination to MTI and phosphorolysis to hypoxanthine.</text>
</comment>
<comment type="catalytic activity">
    <reaction evidence="1">
        <text>S-methyl-5'-thioinosine + phosphate = 5-(methylsulfanyl)-alpha-D-ribose 1-phosphate + hypoxanthine</text>
        <dbReference type="Rhea" id="RHEA:30643"/>
        <dbReference type="ChEBI" id="CHEBI:17368"/>
        <dbReference type="ChEBI" id="CHEBI:43474"/>
        <dbReference type="ChEBI" id="CHEBI:48595"/>
        <dbReference type="ChEBI" id="CHEBI:58533"/>
        <dbReference type="EC" id="2.4.2.44"/>
    </reaction>
</comment>
<comment type="pathway">
    <text evidence="1">Purine metabolism; purine nucleoside salvage.</text>
</comment>
<comment type="subunit">
    <text evidence="1">Homotrimer.</text>
</comment>
<comment type="miscellaneous">
    <text evidence="1">Although this enzyme belongs to the family of MTA phosphorylases based on sequence homology, it has been shown that conserved amino acid substitutions in the substrate binding pocket convert the substrate specificity of this enzyme from 6-aminopurines to 6-oxopurines.</text>
</comment>
<comment type="similarity">
    <text evidence="1">Belongs to the PNP/MTAP phosphorylase family. MTAP subfamily.</text>
</comment>
<feature type="chain" id="PRO_0000184559" description="Probable S-methyl-5'-thioinosine phosphorylase">
    <location>
        <begin position="1"/>
        <end position="252"/>
    </location>
</feature>
<feature type="binding site" evidence="1">
    <location>
        <position position="8"/>
    </location>
    <ligand>
        <name>phosphate</name>
        <dbReference type="ChEBI" id="CHEBI:43474"/>
    </ligand>
</feature>
<feature type="binding site" evidence="1">
    <location>
        <begin position="44"/>
        <end position="45"/>
    </location>
    <ligand>
        <name>phosphate</name>
        <dbReference type="ChEBI" id="CHEBI:43474"/>
    </ligand>
</feature>
<feature type="binding site" evidence="1">
    <location>
        <position position="173"/>
    </location>
    <ligand>
        <name>substrate</name>
    </ligand>
</feature>
<feature type="binding site" evidence="1">
    <location>
        <position position="174"/>
    </location>
    <ligand>
        <name>phosphate</name>
        <dbReference type="ChEBI" id="CHEBI:43474"/>
    </ligand>
</feature>
<feature type="binding site" evidence="1">
    <location>
        <begin position="197"/>
        <end position="199"/>
    </location>
    <ligand>
        <name>substrate</name>
    </ligand>
</feature>
<feature type="site" description="Important for substrate specificity" evidence="1">
    <location>
        <position position="156"/>
    </location>
</feature>
<feature type="site" description="Important for substrate specificity" evidence="1">
    <location>
        <position position="209"/>
    </location>
</feature>
<sequence length="252" mass="28664">MIGIIGGTGIAEILKGDKEEIINTKYGKARVIIDKENEVVLLFRHGVRHNIPPHKINYRANIYALKKLGVERILAINSVGSLKEDLKPGMFFVPNDFIEFTKKREETFYDEGKVVHIDMTDPYCPELRNILKSILDKNNFSYGEGVYVCTEGPRFETKKEIAIYKNWGDVVGMTGYPEVVLARELEMCYVSLCNITNYACGISKNILTVDEVLEKIKEMENKILKVVEDFINYGFGERKCICKDALKHAVIG</sequence>
<name>MTIP_METJA</name>
<reference key="1">
    <citation type="journal article" date="1996" name="Science">
        <title>Complete genome sequence of the methanogenic archaeon, Methanococcus jannaschii.</title>
        <authorList>
            <person name="Bult C.J."/>
            <person name="White O."/>
            <person name="Olsen G.J."/>
            <person name="Zhou L."/>
            <person name="Fleischmann R.D."/>
            <person name="Sutton G.G."/>
            <person name="Blake J.A."/>
            <person name="FitzGerald L.M."/>
            <person name="Clayton R.A."/>
            <person name="Gocayne J.D."/>
            <person name="Kerlavage A.R."/>
            <person name="Dougherty B.A."/>
            <person name="Tomb J.-F."/>
            <person name="Adams M.D."/>
            <person name="Reich C.I."/>
            <person name="Overbeek R."/>
            <person name="Kirkness E.F."/>
            <person name="Weinstock K.G."/>
            <person name="Merrick J.M."/>
            <person name="Glodek A."/>
            <person name="Scott J.L."/>
            <person name="Geoghagen N.S.M."/>
            <person name="Weidman J.F."/>
            <person name="Fuhrmann J.L."/>
            <person name="Nguyen D."/>
            <person name="Utterback T.R."/>
            <person name="Kelley J.M."/>
            <person name="Peterson J.D."/>
            <person name="Sadow P.W."/>
            <person name="Hanna M.C."/>
            <person name="Cotton M.D."/>
            <person name="Roberts K.M."/>
            <person name="Hurst M.A."/>
            <person name="Kaine B.P."/>
            <person name="Borodovsky M."/>
            <person name="Klenk H.-P."/>
            <person name="Fraser C.M."/>
            <person name="Smith H.O."/>
            <person name="Woese C.R."/>
            <person name="Venter J.C."/>
        </authorList>
    </citation>
    <scope>NUCLEOTIDE SEQUENCE [LARGE SCALE GENOMIC DNA]</scope>
    <source>
        <strain>ATCC 43067 / DSM 2661 / JAL-1 / JCM 10045 / NBRC 100440</strain>
    </source>
</reference>
<organism>
    <name type="scientific">Methanocaldococcus jannaschii (strain ATCC 43067 / DSM 2661 / JAL-1 / JCM 10045 / NBRC 100440)</name>
    <name type="common">Methanococcus jannaschii</name>
    <dbReference type="NCBI Taxonomy" id="243232"/>
    <lineage>
        <taxon>Archaea</taxon>
        <taxon>Methanobacteriati</taxon>
        <taxon>Methanobacteriota</taxon>
        <taxon>Methanomada group</taxon>
        <taxon>Methanococci</taxon>
        <taxon>Methanococcales</taxon>
        <taxon>Methanocaldococcaceae</taxon>
        <taxon>Methanocaldococcus</taxon>
    </lineage>
</organism>
<dbReference type="EC" id="2.4.2.44" evidence="1"/>
<dbReference type="EMBL" id="L77117">
    <property type="protein sequence ID" value="AAB98042.1"/>
    <property type="molecule type" value="Genomic_DNA"/>
</dbReference>
<dbReference type="PIR" id="D64307">
    <property type="entry name" value="D64307"/>
</dbReference>
<dbReference type="RefSeq" id="WP_010869552.1">
    <property type="nucleotide sequence ID" value="NC_000909.1"/>
</dbReference>
<dbReference type="SMR" id="Q60367"/>
<dbReference type="FunCoup" id="Q60367">
    <property type="interactions" value="156"/>
</dbReference>
<dbReference type="STRING" id="243232.MJ_0060"/>
<dbReference type="PaxDb" id="243232-MJ_0060"/>
<dbReference type="EnsemblBacteria" id="AAB98042">
    <property type="protein sequence ID" value="AAB98042"/>
    <property type="gene ID" value="MJ_0060"/>
</dbReference>
<dbReference type="GeneID" id="1450899"/>
<dbReference type="KEGG" id="mja:MJ_0060"/>
<dbReference type="eggNOG" id="arCOG01327">
    <property type="taxonomic scope" value="Archaea"/>
</dbReference>
<dbReference type="HOGENOM" id="CLU_054456_0_2_2"/>
<dbReference type="InParanoid" id="Q60367"/>
<dbReference type="OrthoDB" id="7681at2157"/>
<dbReference type="PhylomeDB" id="Q60367"/>
<dbReference type="UniPathway" id="UPA00606"/>
<dbReference type="Proteomes" id="UP000000805">
    <property type="component" value="Chromosome"/>
</dbReference>
<dbReference type="GO" id="GO:0005829">
    <property type="term" value="C:cytosol"/>
    <property type="evidence" value="ECO:0000318"/>
    <property type="project" value="GO_Central"/>
</dbReference>
<dbReference type="GO" id="GO:0017061">
    <property type="term" value="F:S-methyl-5-thioadenosine phosphorylase activity"/>
    <property type="evidence" value="ECO:0000318"/>
    <property type="project" value="GO_Central"/>
</dbReference>
<dbReference type="GO" id="GO:0019509">
    <property type="term" value="P:L-methionine salvage from methylthioadenosine"/>
    <property type="evidence" value="ECO:0000318"/>
    <property type="project" value="GO_Central"/>
</dbReference>
<dbReference type="GO" id="GO:0006166">
    <property type="term" value="P:purine ribonucleoside salvage"/>
    <property type="evidence" value="ECO:0007669"/>
    <property type="project" value="UniProtKB-UniRule"/>
</dbReference>
<dbReference type="CDD" id="cd09010">
    <property type="entry name" value="MTAP_SsMTAPII_like_MTIP"/>
    <property type="match status" value="1"/>
</dbReference>
<dbReference type="FunFam" id="3.40.50.1580:FF:000012">
    <property type="entry name" value="Probable 6-oxopurine nucleoside phosphorylase"/>
    <property type="match status" value="1"/>
</dbReference>
<dbReference type="Gene3D" id="3.40.50.1580">
    <property type="entry name" value="Nucleoside phosphorylase domain"/>
    <property type="match status" value="1"/>
</dbReference>
<dbReference type="HAMAP" id="MF_01963">
    <property type="entry name" value="MTAP"/>
    <property type="match status" value="1"/>
</dbReference>
<dbReference type="InterPro" id="IPR010044">
    <property type="entry name" value="MTAP"/>
</dbReference>
<dbReference type="InterPro" id="IPR000845">
    <property type="entry name" value="Nucleoside_phosphorylase_d"/>
</dbReference>
<dbReference type="InterPro" id="IPR035994">
    <property type="entry name" value="Nucleoside_phosphorylase_sf"/>
</dbReference>
<dbReference type="InterPro" id="IPR018099">
    <property type="entry name" value="Purine_phosphorylase-2_CS"/>
</dbReference>
<dbReference type="NCBIfam" id="TIGR01694">
    <property type="entry name" value="MTAP"/>
    <property type="match status" value="1"/>
</dbReference>
<dbReference type="NCBIfam" id="NF006599">
    <property type="entry name" value="PRK09136.1"/>
    <property type="match status" value="1"/>
</dbReference>
<dbReference type="PANTHER" id="PTHR42679">
    <property type="entry name" value="S-METHYL-5'-THIOADENOSINE PHOSPHORYLASE"/>
    <property type="match status" value="1"/>
</dbReference>
<dbReference type="PANTHER" id="PTHR42679:SF2">
    <property type="entry name" value="S-METHYL-5'-THIOADENOSINE PHOSPHORYLASE"/>
    <property type="match status" value="1"/>
</dbReference>
<dbReference type="Pfam" id="PF01048">
    <property type="entry name" value="PNP_UDP_1"/>
    <property type="match status" value="1"/>
</dbReference>
<dbReference type="SUPFAM" id="SSF53167">
    <property type="entry name" value="Purine and uridine phosphorylases"/>
    <property type="match status" value="1"/>
</dbReference>
<dbReference type="PROSITE" id="PS01240">
    <property type="entry name" value="PNP_MTAP_2"/>
    <property type="match status" value="1"/>
</dbReference>
<proteinExistence type="inferred from homology"/>
<evidence type="ECO:0000255" key="1">
    <source>
        <dbReference type="HAMAP-Rule" id="MF_01963"/>
    </source>
</evidence>
<protein>
    <recommendedName>
        <fullName evidence="1">Probable S-methyl-5'-thioinosine phosphorylase</fullName>
        <ecNumber evidence="1">2.4.2.44</ecNumber>
    </recommendedName>
    <alternativeName>
        <fullName evidence="1">5'-methylthioinosine phosphorylase</fullName>
        <shortName evidence="1">MTI phosphorylase</shortName>
        <shortName evidence="1">MTIP</shortName>
    </alternativeName>
</protein>
<gene>
    <name type="ordered locus">MJ0060</name>
</gene>